<gene>
    <name evidence="1" type="primary">rplL</name>
</gene>
<accession>P05392</accession>
<reference key="1">
    <citation type="journal article" date="1987" name="FEBS Lett.">
        <title>The complete amino acid sequence of the ribosomal 'A' protein (L12) from Bacillus stearothermophilus.</title>
        <authorList>
            <person name="Garland W.G."/>
            <person name="Louie K.A."/>
            <person name="Matheson A.T."/>
            <person name="Liljas A."/>
        </authorList>
    </citation>
    <scope>PROTEIN SEQUENCE</scope>
</reference>
<reference key="2">
    <citation type="journal article" date="1979" name="Can. J. Biochem.">
        <title>Structural homologies in alanine-rich acidic ribosomal proteins from procaryotes and eucaryotes.</title>
        <authorList>
            <person name="Visentin L.P."/>
            <person name="Yaguchi M."/>
            <person name="Matheson A.T."/>
        </authorList>
    </citation>
    <scope>PROTEIN SEQUENCE OF 1-37</scope>
</reference>
<reference key="3">
    <citation type="journal article" date="2010" name="Mol. Cell. Proteomics">
        <title>Mass spectrometry defines the stoichiometry of ribosomal stalk complexes across the phylogenetic tree.</title>
        <authorList>
            <person name="Gordiyenko Y."/>
            <person name="Videler H."/>
            <person name="Zhou M."/>
            <person name="McKay A.R."/>
            <person name="Fucini P."/>
            <person name="Biegel E."/>
            <person name="Muller V."/>
            <person name="Robinson C.V."/>
        </authorList>
    </citation>
    <scope>SUBUNIT</scope>
    <scope>STOICHIOMETRY</scope>
    <scope>MASS SPECTROMETRY</scope>
</reference>
<proteinExistence type="evidence at protein level"/>
<evidence type="ECO:0000255" key="1">
    <source>
        <dbReference type="HAMAP-Rule" id="MF_00368"/>
    </source>
</evidence>
<evidence type="ECO:0000269" key="2">
    <source>
    </source>
</evidence>
<evidence type="ECO:0000305" key="3"/>
<comment type="function">
    <text evidence="3">Forms part of the ribosomal stalk which helps the ribosome interact with GTP-bound translation factors. Is thus essential for accurate translation (Probable).</text>
</comment>
<comment type="subunit">
    <text evidence="2">Homodimer. Part of the 50S ribosomal subunit; present in 4 copies per ribosome. Forms part of the ribosomal stalk which helps the ribosome interact with GTP-bound translation factors. Forms a pentameric L10(L12)2(L12)2 complex, where L10 forms an elongated spine to which 2 L12 dimers bind in a sequential fashion.</text>
</comment>
<comment type="mass spectrometry" mass="69481.25" error="26.4" method="Electrospray" evidence="2">
    <text>Isolated L10(L12)4, grown at 55 degrees Celsius.</text>
</comment>
<comment type="mass spectrometry" mass="12835.6" error="1.0" method="Electrospray" evidence="2">
    <text>Grown at 55 degrees Celsius.</text>
</comment>
<comment type="similarity">
    <text evidence="1">Belongs to the bacterial ribosomal protein bL12 family.</text>
</comment>
<feature type="chain" id="PRO_0000157504" description="Large ribosomal subunit protein bL12">
    <location>
        <begin position="1"/>
        <end position="122"/>
    </location>
</feature>
<feature type="sequence conflict" description="In Ref. 2; AA sequence." evidence="3" ref="2">
    <original>E</original>
    <variation>Q</variation>
    <location>
        <position position="8"/>
    </location>
</feature>
<name>RL7_GEOSE</name>
<protein>
    <recommendedName>
        <fullName evidence="1">Large ribosomal subunit protein bL12</fullName>
    </recommendedName>
    <alternativeName>
        <fullName evidence="3">50S ribosomal protein L7/L12</fullName>
    </alternativeName>
    <alternativeName>
        <fullName>BL13</fullName>
    </alternativeName>
    <alternativeName>
        <fullName>Ribosomal protein 'A'</fullName>
    </alternativeName>
</protein>
<organism>
    <name type="scientific">Geobacillus stearothermophilus</name>
    <name type="common">Bacillus stearothermophilus</name>
    <dbReference type="NCBI Taxonomy" id="1422"/>
    <lineage>
        <taxon>Bacteria</taxon>
        <taxon>Bacillati</taxon>
        <taxon>Bacillota</taxon>
        <taxon>Bacilli</taxon>
        <taxon>Bacillales</taxon>
        <taxon>Anoxybacillaceae</taxon>
        <taxon>Geobacillus</taxon>
    </lineage>
</organism>
<dbReference type="PIR" id="S00076">
    <property type="entry name" value="R5BS12"/>
</dbReference>
<dbReference type="SMR" id="P05392"/>
<dbReference type="GO" id="GO:0022625">
    <property type="term" value="C:cytosolic large ribosomal subunit"/>
    <property type="evidence" value="ECO:0007669"/>
    <property type="project" value="TreeGrafter"/>
</dbReference>
<dbReference type="GO" id="GO:0003729">
    <property type="term" value="F:mRNA binding"/>
    <property type="evidence" value="ECO:0007669"/>
    <property type="project" value="TreeGrafter"/>
</dbReference>
<dbReference type="GO" id="GO:0003735">
    <property type="term" value="F:structural constituent of ribosome"/>
    <property type="evidence" value="ECO:0007669"/>
    <property type="project" value="InterPro"/>
</dbReference>
<dbReference type="GO" id="GO:0006412">
    <property type="term" value="P:translation"/>
    <property type="evidence" value="ECO:0007669"/>
    <property type="project" value="UniProtKB-UniRule"/>
</dbReference>
<dbReference type="CDD" id="cd00387">
    <property type="entry name" value="Ribosomal_L7_L12"/>
    <property type="match status" value="1"/>
</dbReference>
<dbReference type="FunFam" id="1.20.5.710:FF:000002">
    <property type="entry name" value="50S ribosomal protein L7/L12"/>
    <property type="match status" value="1"/>
</dbReference>
<dbReference type="FunFam" id="3.30.1390.10:FF:000001">
    <property type="entry name" value="50S ribosomal protein L7/L12"/>
    <property type="match status" value="1"/>
</dbReference>
<dbReference type="Gene3D" id="3.30.1390.10">
    <property type="match status" value="1"/>
</dbReference>
<dbReference type="Gene3D" id="1.20.5.710">
    <property type="entry name" value="Single helix bin"/>
    <property type="match status" value="1"/>
</dbReference>
<dbReference type="HAMAP" id="MF_00368">
    <property type="entry name" value="Ribosomal_bL12"/>
    <property type="match status" value="1"/>
</dbReference>
<dbReference type="InterPro" id="IPR000206">
    <property type="entry name" value="Ribosomal_bL12"/>
</dbReference>
<dbReference type="InterPro" id="IPR013823">
    <property type="entry name" value="Ribosomal_bL12_C"/>
</dbReference>
<dbReference type="InterPro" id="IPR014719">
    <property type="entry name" value="Ribosomal_bL12_C/ClpS-like"/>
</dbReference>
<dbReference type="InterPro" id="IPR008932">
    <property type="entry name" value="Ribosomal_bL12_oligo"/>
</dbReference>
<dbReference type="InterPro" id="IPR036235">
    <property type="entry name" value="Ribosomal_bL12_oligo_N_sf"/>
</dbReference>
<dbReference type="NCBIfam" id="TIGR00855">
    <property type="entry name" value="L12"/>
    <property type="match status" value="1"/>
</dbReference>
<dbReference type="PANTHER" id="PTHR45987">
    <property type="entry name" value="39S RIBOSOMAL PROTEIN L12"/>
    <property type="match status" value="1"/>
</dbReference>
<dbReference type="PANTHER" id="PTHR45987:SF4">
    <property type="entry name" value="LARGE RIBOSOMAL SUBUNIT PROTEIN BL12M"/>
    <property type="match status" value="1"/>
</dbReference>
<dbReference type="Pfam" id="PF00542">
    <property type="entry name" value="Ribosomal_L12"/>
    <property type="match status" value="1"/>
</dbReference>
<dbReference type="Pfam" id="PF16320">
    <property type="entry name" value="Ribosomal_L12_N"/>
    <property type="match status" value="1"/>
</dbReference>
<dbReference type="SUPFAM" id="SSF54736">
    <property type="entry name" value="ClpS-like"/>
    <property type="match status" value="1"/>
</dbReference>
<dbReference type="SUPFAM" id="SSF48300">
    <property type="entry name" value="Ribosomal protein L7/12, oligomerisation (N-terminal) domain"/>
    <property type="match status" value="1"/>
</dbReference>
<keyword id="KW-0903">Direct protein sequencing</keyword>
<keyword id="KW-0687">Ribonucleoprotein</keyword>
<keyword id="KW-0689">Ribosomal protein</keyword>
<sequence length="122" mass="12780">MTKEQIIEAVKNMTVLELNELVKAIEEEFGVTAAAPVVVAGGAAAGAEAAAEKTEFDVILADAGAQKIKVIKVVREITGLGLKEAKDLVDNTPKPIKEGIAKEEAEEIKAALEEAGAKVEIK</sequence>